<name>1433_HELAN</name>
<evidence type="ECO:0000305" key="1"/>
<feature type="chain" id="PRO_0000058677" description="14-3-3-like protein">
    <location>
        <begin position="1"/>
        <end position="259"/>
    </location>
</feature>
<reference key="1">
    <citation type="submission" date="1998-05" db="EMBL/GenBank/DDBJ databases">
        <authorList>
            <person name="Eliasson A."/>
            <person name="Hammann P."/>
            <person name="Steinmetz A."/>
        </authorList>
    </citation>
    <scope>NUCLEOTIDE SEQUENCE [MRNA]</scope>
    <source>
        <strain>cv. HA300</strain>
        <tissue>Pollen</tissue>
    </source>
</reference>
<dbReference type="EMBL" id="AF066076">
    <property type="protein sequence ID" value="AAC17447.1"/>
    <property type="molecule type" value="mRNA"/>
</dbReference>
<dbReference type="PIR" id="T12951">
    <property type="entry name" value="T12951"/>
</dbReference>
<dbReference type="RefSeq" id="NP_001413451.1">
    <property type="nucleotide sequence ID" value="NM_001426522.1"/>
</dbReference>
<dbReference type="SMR" id="O65352"/>
<dbReference type="EnsemblPlants" id="mRNA:HanXRQr2_Chr09g0391781">
    <property type="protein sequence ID" value="mRNA:HanXRQr2_Chr09g0391781"/>
    <property type="gene ID" value="HanXRQr2_Chr09g0391781"/>
</dbReference>
<dbReference type="GeneID" id="110889255"/>
<dbReference type="Gramene" id="mRNA:HanXRQr2_Chr09g0391781">
    <property type="protein sequence ID" value="mRNA:HanXRQr2_Chr09g0391781"/>
    <property type="gene ID" value="HanXRQr2_Chr09g0391781"/>
</dbReference>
<dbReference type="OMA" id="AVCMKEV"/>
<dbReference type="OrthoDB" id="10260625at2759"/>
<dbReference type="PhylomeDB" id="O65352"/>
<dbReference type="FunFam" id="1.20.190.20:FF:000002">
    <property type="entry name" value="14-3-3 protein epsilon"/>
    <property type="match status" value="1"/>
</dbReference>
<dbReference type="Gene3D" id="1.20.190.20">
    <property type="entry name" value="14-3-3 domain"/>
    <property type="match status" value="1"/>
</dbReference>
<dbReference type="InterPro" id="IPR000308">
    <property type="entry name" value="14-3-3"/>
</dbReference>
<dbReference type="InterPro" id="IPR023409">
    <property type="entry name" value="14-3-3_CS"/>
</dbReference>
<dbReference type="InterPro" id="IPR036815">
    <property type="entry name" value="14-3-3_dom_sf"/>
</dbReference>
<dbReference type="InterPro" id="IPR023410">
    <property type="entry name" value="14-3-3_domain"/>
</dbReference>
<dbReference type="PANTHER" id="PTHR18860">
    <property type="entry name" value="14-3-3 PROTEIN"/>
    <property type="match status" value="1"/>
</dbReference>
<dbReference type="Pfam" id="PF00244">
    <property type="entry name" value="14-3-3"/>
    <property type="match status" value="1"/>
</dbReference>
<dbReference type="PIRSF" id="PIRSF000868">
    <property type="entry name" value="14-3-3"/>
    <property type="match status" value="1"/>
</dbReference>
<dbReference type="PRINTS" id="PR00305">
    <property type="entry name" value="1433ZETA"/>
</dbReference>
<dbReference type="SMART" id="SM00101">
    <property type="entry name" value="14_3_3"/>
    <property type="match status" value="1"/>
</dbReference>
<dbReference type="SUPFAM" id="SSF48445">
    <property type="entry name" value="14-3-3 protein"/>
    <property type="match status" value="1"/>
</dbReference>
<dbReference type="PROSITE" id="PS00796">
    <property type="entry name" value="1433_1"/>
    <property type="match status" value="1"/>
</dbReference>
<dbReference type="PROSITE" id="PS00797">
    <property type="entry name" value="1433_2"/>
    <property type="match status" value="1"/>
</dbReference>
<organism>
    <name type="scientific">Helianthus annuus</name>
    <name type="common">Common sunflower</name>
    <dbReference type="NCBI Taxonomy" id="4232"/>
    <lineage>
        <taxon>Eukaryota</taxon>
        <taxon>Viridiplantae</taxon>
        <taxon>Streptophyta</taxon>
        <taxon>Embryophyta</taxon>
        <taxon>Tracheophyta</taxon>
        <taxon>Spermatophyta</taxon>
        <taxon>Magnoliopsida</taxon>
        <taxon>eudicotyledons</taxon>
        <taxon>Gunneridae</taxon>
        <taxon>Pentapetalae</taxon>
        <taxon>asterids</taxon>
        <taxon>campanulids</taxon>
        <taxon>Asterales</taxon>
        <taxon>Asteraceae</taxon>
        <taxon>Asteroideae</taxon>
        <taxon>Heliantheae alliance</taxon>
        <taxon>Heliantheae</taxon>
        <taxon>Helianthus</taxon>
    </lineage>
</organism>
<accession>O65352</accession>
<comment type="similarity">
    <text evidence="1">Belongs to the 14-3-3 family.</text>
</comment>
<proteinExistence type="evidence at transcript level"/>
<protein>
    <recommendedName>
        <fullName>14-3-3-like protein</fullName>
    </recommendedName>
</protein>
<sequence>MAAASSPREENVYLAKLAEQAERYEEMVEFMEKVVAAADGGEELTIEERNLLSVAYKNVIGARRASWRIISSIEQKEESRGNEGHVSTIRDYRSKIESELSSICDGILKVLDSKLIGSASGGDSKVFYLKMKGDYYRYLAEFKTGDERKLAAENTLSAYKAAQDIANAELAPTHPIRLGLALNFSVFYYEILNSPDRACNLAKQAFDEAIAELDTLGEDSYKDSTLIMQLLRDNLTLWTSDMQDDTAEEVKEAPKPDDQ</sequence>